<organism>
    <name type="scientific">Caenorhabditis elegans</name>
    <dbReference type="NCBI Taxonomy" id="6239"/>
    <lineage>
        <taxon>Eukaryota</taxon>
        <taxon>Metazoa</taxon>
        <taxon>Ecdysozoa</taxon>
        <taxon>Nematoda</taxon>
        <taxon>Chromadorea</taxon>
        <taxon>Rhabditida</taxon>
        <taxon>Rhabditina</taxon>
        <taxon>Rhabditomorpha</taxon>
        <taxon>Rhabditoidea</taxon>
        <taxon>Rhabditidae</taxon>
        <taxon>Peloderinae</taxon>
        <taxon>Caenorhabditis</taxon>
    </lineage>
</organism>
<feature type="chain" id="PRO_0000420623" description="Potassium voltage-gated channel protein shk-1">
    <location>
        <begin position="1"/>
        <end position="536"/>
    </location>
</feature>
<feature type="topological domain" description="Cytoplasmic" evidence="2">
    <location>
        <begin position="1"/>
        <end position="275"/>
    </location>
</feature>
<feature type="transmembrane region" description="Helical; Name=Segment S1" evidence="2">
    <location>
        <begin position="276"/>
        <end position="296"/>
    </location>
</feature>
<feature type="topological domain" description="Extracellular" evidence="2">
    <location>
        <begin position="297"/>
        <end position="322"/>
    </location>
</feature>
<feature type="transmembrane region" description="Helical; Name=Segment S2" evidence="2">
    <location>
        <begin position="323"/>
        <end position="343"/>
    </location>
</feature>
<feature type="topological domain" description="Cytoplasmic" evidence="2">
    <location>
        <begin position="344"/>
        <end position="356"/>
    </location>
</feature>
<feature type="transmembrane region" description="Helical; Name=Segment S3" evidence="2">
    <location>
        <begin position="357"/>
        <end position="377"/>
    </location>
</feature>
<feature type="topological domain" description="Extracellular" evidence="2">
    <location>
        <begin position="378"/>
        <end position="425"/>
    </location>
</feature>
<feature type="transmembrane region" description="Helical; Voltage-sensor; Name=Segment S4" evidence="2">
    <location>
        <begin position="426"/>
        <end position="446"/>
    </location>
</feature>
<feature type="topological domain" description="Cytoplasmic" evidence="2">
    <location>
        <begin position="447"/>
        <end position="458"/>
    </location>
</feature>
<feature type="transmembrane region" description="Helical; Name=Segment S5" evidence="2">
    <location>
        <begin position="459"/>
        <end position="479"/>
    </location>
</feature>
<feature type="topological domain" description="Extracellular" evidence="2">
    <location>
        <begin position="480"/>
        <end position="486"/>
    </location>
</feature>
<feature type="transmembrane region" description="Helical; Name=Segment S6" evidence="2">
    <location>
        <begin position="487"/>
        <end position="507"/>
    </location>
</feature>
<feature type="topological domain" description="Cytoplasmic" evidence="2">
    <location>
        <begin position="508"/>
        <end position="536"/>
    </location>
</feature>
<feature type="region of interest" description="Disordered" evidence="3">
    <location>
        <begin position="1"/>
        <end position="31"/>
    </location>
</feature>
<feature type="region of interest" description="Disordered" evidence="3">
    <location>
        <begin position="87"/>
        <end position="131"/>
    </location>
</feature>
<feature type="compositionally biased region" description="Polar residues" evidence="3">
    <location>
        <begin position="116"/>
        <end position="131"/>
    </location>
</feature>
<feature type="splice variant" id="VSP_044570" description="In isoform f." evidence="7">
    <location>
        <begin position="1"/>
        <end position="89"/>
    </location>
</feature>
<feature type="splice variant" id="VSP_044571" description="In isoform e." evidence="7">
    <original>MRFGGQRRCIESSDDNDSIDSMSIQQKNKEKEEWKWAQSLARRLEQVLNVHPEKYQNGCSSQRPSRQPSPVEQLAPIRSHSADFG</original>
    <variation>MWRFNRIKS</variation>
    <location>
        <begin position="1"/>
        <end position="85"/>
    </location>
</feature>
<feature type="splice variant" id="VSP_044572" description="In isoform d." evidence="7">
    <original>MRFGGQRRCIESSDDNDSIDSMSIQQKNKEKEEWKWAQSLA</original>
    <variation>MIDSLI</variation>
    <location>
        <begin position="1"/>
        <end position="41"/>
    </location>
</feature>
<feature type="splice variant" id="VSP_044573" description="In isoform a." evidence="7">
    <original>RRLEQVLNVHPEKYQNGCSSQRPSRQPSPVEQLAPIRSHSADFG</original>
    <variation>S</variation>
    <location>
        <begin position="42"/>
        <end position="85"/>
    </location>
</feature>
<feature type="splice variant" id="VSP_044574" description="In isoform g." evidence="7">
    <location>
        <begin position="126"/>
        <end position="536"/>
    </location>
</feature>
<feature type="splice variant" id="VSP_044575" description="In isoform b, isoform a, isoform e and isoform f." evidence="7">
    <location>
        <begin position="185"/>
        <end position="196"/>
    </location>
</feature>
<dbReference type="EMBL" id="Z48584">
    <property type="protein sequence ID" value="CAA88477.2"/>
    <property type="molecule type" value="Genomic_DNA"/>
</dbReference>
<dbReference type="EMBL" id="Z48584">
    <property type="protein sequence ID" value="CAD57715.1"/>
    <property type="molecule type" value="Genomic_DNA"/>
</dbReference>
<dbReference type="EMBL" id="Z48584">
    <property type="protein sequence ID" value="CAD57716.1"/>
    <property type="molecule type" value="Genomic_DNA"/>
</dbReference>
<dbReference type="EMBL" id="Z48584">
    <property type="protein sequence ID" value="CAD57717.1"/>
    <property type="molecule type" value="Genomic_DNA"/>
</dbReference>
<dbReference type="EMBL" id="Z48584">
    <property type="protein sequence ID" value="CAH04712.1"/>
    <property type="molecule type" value="Genomic_DNA"/>
</dbReference>
<dbReference type="EMBL" id="Z48584">
    <property type="protein sequence ID" value="CAK55179.1"/>
    <property type="molecule type" value="Genomic_DNA"/>
</dbReference>
<dbReference type="EMBL" id="Z48584">
    <property type="protein sequence ID" value="CBX53352.1"/>
    <property type="molecule type" value="Genomic_DNA"/>
</dbReference>
<dbReference type="RefSeq" id="NP_001022516.1">
    <molecule id="Q8I4B0-5"/>
    <property type="nucleotide sequence ID" value="NM_001027345.5"/>
</dbReference>
<dbReference type="RefSeq" id="NP_001040829.1">
    <molecule id="Q8I4B0-6"/>
    <property type="nucleotide sequence ID" value="NM_001047364.4"/>
</dbReference>
<dbReference type="RefSeq" id="NP_001254226.1">
    <property type="nucleotide sequence ID" value="NM_001267297.1"/>
</dbReference>
<dbReference type="RefSeq" id="NP_496104.2">
    <molecule id="Q8I4B0-4"/>
    <property type="nucleotide sequence ID" value="NM_063703.4"/>
</dbReference>
<dbReference type="RefSeq" id="NP_871934.1">
    <molecule id="Q8I4B0-2"/>
    <property type="nucleotide sequence ID" value="NM_182134.6"/>
</dbReference>
<dbReference type="RefSeq" id="NP_871935.1">
    <molecule id="Q8I4B0-1"/>
    <property type="nucleotide sequence ID" value="NM_182135.6"/>
</dbReference>
<dbReference type="RefSeq" id="NP_871936.1">
    <molecule id="Q8I4B0-3"/>
    <property type="nucleotide sequence ID" value="NM_182136.6"/>
</dbReference>
<dbReference type="SMR" id="Q8I4B0"/>
<dbReference type="FunCoup" id="Q8I4B0">
    <property type="interactions" value="1162"/>
</dbReference>
<dbReference type="STRING" id="6239.ZK1321.2c.1"/>
<dbReference type="TCDB" id="1.A.1.2.20">
    <property type="family name" value="the voltage-gated ion channel (vic) superfamily"/>
</dbReference>
<dbReference type="PaxDb" id="6239-ZK1321.2c"/>
<dbReference type="PeptideAtlas" id="Q8I4B0"/>
<dbReference type="ABCD" id="Q8I4B0">
    <property type="antibodies" value="1 sequenced antibody"/>
</dbReference>
<dbReference type="EnsemblMetazoa" id="ZK1321.2a.1">
    <molecule id="Q8I4B0-4"/>
    <property type="protein sequence ID" value="ZK1321.2a.1"/>
    <property type="gene ID" value="WBGene00014261"/>
</dbReference>
<dbReference type="EnsemblMetazoa" id="ZK1321.2b.1">
    <molecule id="Q8I4B0-2"/>
    <property type="protein sequence ID" value="ZK1321.2b.1"/>
    <property type="gene ID" value="WBGene00014261"/>
</dbReference>
<dbReference type="EnsemblMetazoa" id="ZK1321.2c.1">
    <molecule id="Q8I4B0-1"/>
    <property type="protein sequence ID" value="ZK1321.2c.1"/>
    <property type="gene ID" value="WBGene00014261"/>
</dbReference>
<dbReference type="EnsemblMetazoa" id="ZK1321.2d.1">
    <molecule id="Q8I4B0-3"/>
    <property type="protein sequence ID" value="ZK1321.2d.1"/>
    <property type="gene ID" value="WBGene00014261"/>
</dbReference>
<dbReference type="EnsemblMetazoa" id="ZK1321.2e.1">
    <molecule id="Q8I4B0-5"/>
    <property type="protein sequence ID" value="ZK1321.2e.1"/>
    <property type="gene ID" value="WBGene00014261"/>
</dbReference>
<dbReference type="EnsemblMetazoa" id="ZK1321.2f.1">
    <molecule id="Q8I4B0-6"/>
    <property type="protein sequence ID" value="ZK1321.2f.1"/>
    <property type="gene ID" value="WBGene00014261"/>
</dbReference>
<dbReference type="GeneID" id="174536"/>
<dbReference type="KEGG" id="cel:CELE_ZK1321.2"/>
<dbReference type="UCSC" id="ZK1321.2a">
    <property type="organism name" value="c. elegans"/>
</dbReference>
<dbReference type="AGR" id="WB:WBGene00014261"/>
<dbReference type="CTD" id="174536"/>
<dbReference type="WormBase" id="ZK1321.2a">
    <molecule id="Q8I4B0-4"/>
    <property type="protein sequence ID" value="CE32769"/>
    <property type="gene ID" value="WBGene00014261"/>
    <property type="gene designation" value="shk-1"/>
</dbReference>
<dbReference type="WormBase" id="ZK1321.2b">
    <molecule id="Q8I4B0-2"/>
    <property type="protein sequence ID" value="CE32770"/>
    <property type="gene ID" value="WBGene00014261"/>
    <property type="gene designation" value="shk-1"/>
</dbReference>
<dbReference type="WormBase" id="ZK1321.2c">
    <molecule id="Q8I4B0-1"/>
    <property type="protein sequence ID" value="CE32771"/>
    <property type="gene ID" value="WBGene00014261"/>
    <property type="gene designation" value="shk-1"/>
</dbReference>
<dbReference type="WormBase" id="ZK1321.2d">
    <molecule id="Q8I4B0-3"/>
    <property type="protein sequence ID" value="CE32772"/>
    <property type="gene ID" value="WBGene00014261"/>
    <property type="gene designation" value="shk-1"/>
</dbReference>
<dbReference type="WormBase" id="ZK1321.2e">
    <molecule id="Q8I4B0-5"/>
    <property type="protein sequence ID" value="CE36966"/>
    <property type="gene ID" value="WBGene00014261"/>
    <property type="gene designation" value="shk-1"/>
</dbReference>
<dbReference type="WormBase" id="ZK1321.2f">
    <molecule id="Q8I4B0-6"/>
    <property type="protein sequence ID" value="CE40295"/>
    <property type="gene ID" value="WBGene00014261"/>
    <property type="gene designation" value="shk-1"/>
</dbReference>
<dbReference type="eggNOG" id="KOG1545">
    <property type="taxonomic scope" value="Eukaryota"/>
</dbReference>
<dbReference type="GeneTree" id="ENSGT00940000164717"/>
<dbReference type="InParanoid" id="Q8I4B0"/>
<dbReference type="OMA" id="IWELMEY"/>
<dbReference type="OrthoDB" id="415460at2759"/>
<dbReference type="PhylomeDB" id="Q8I4B0"/>
<dbReference type="Reactome" id="R-CEL-5576890">
    <property type="pathway name" value="Phase 3 - rapid repolarisation"/>
</dbReference>
<dbReference type="PRO" id="PR:Q8I4B0"/>
<dbReference type="Proteomes" id="UP000001940">
    <property type="component" value="Chromosome II"/>
</dbReference>
<dbReference type="Bgee" id="WBGene00014261">
    <property type="expression patterns" value="Expressed in larva and 3 other cell types or tissues"/>
</dbReference>
<dbReference type="GO" id="GO:0016020">
    <property type="term" value="C:membrane"/>
    <property type="evidence" value="ECO:0000318"/>
    <property type="project" value="GO_Central"/>
</dbReference>
<dbReference type="GO" id="GO:0005886">
    <property type="term" value="C:plasma membrane"/>
    <property type="evidence" value="ECO:0007005"/>
    <property type="project" value="WormBase"/>
</dbReference>
<dbReference type="GO" id="GO:0008076">
    <property type="term" value="C:voltage-gated potassium channel complex"/>
    <property type="evidence" value="ECO:0000318"/>
    <property type="project" value="GO_Central"/>
</dbReference>
<dbReference type="GO" id="GO:0005251">
    <property type="term" value="F:delayed rectifier potassium channel activity"/>
    <property type="evidence" value="ECO:0000314"/>
    <property type="project" value="WormBase"/>
</dbReference>
<dbReference type="GO" id="GO:0001508">
    <property type="term" value="P:action potential"/>
    <property type="evidence" value="ECO:0000318"/>
    <property type="project" value="GO_Central"/>
</dbReference>
<dbReference type="GO" id="GO:0071805">
    <property type="term" value="P:potassium ion transmembrane transport"/>
    <property type="evidence" value="ECO:0000314"/>
    <property type="project" value="WormBase"/>
</dbReference>
<dbReference type="GO" id="GO:0051260">
    <property type="term" value="P:protein homooligomerization"/>
    <property type="evidence" value="ECO:0007669"/>
    <property type="project" value="InterPro"/>
</dbReference>
<dbReference type="FunFam" id="1.10.287.70:FF:000011">
    <property type="entry name" value="Potassium channel, voltage-gated Shaw-related subfamily C, member 4"/>
    <property type="match status" value="1"/>
</dbReference>
<dbReference type="FunFam" id="1.20.120.350:FF:000071">
    <property type="entry name" value="Potassium voltage-gated channel protein shk-1"/>
    <property type="match status" value="1"/>
</dbReference>
<dbReference type="FunFam" id="3.30.710.10:FF:000214">
    <property type="entry name" value="Potassium voltage-gated channel protein shk-1"/>
    <property type="match status" value="1"/>
</dbReference>
<dbReference type="Gene3D" id="1.10.287.70">
    <property type="match status" value="1"/>
</dbReference>
<dbReference type="Gene3D" id="3.30.710.10">
    <property type="entry name" value="Potassium Channel Kv1.1, Chain A"/>
    <property type="match status" value="1"/>
</dbReference>
<dbReference type="Gene3D" id="1.20.120.350">
    <property type="entry name" value="Voltage-gated potassium channels. Chain C"/>
    <property type="match status" value="1"/>
</dbReference>
<dbReference type="InterPro" id="IPR005821">
    <property type="entry name" value="Ion_trans_dom"/>
</dbReference>
<dbReference type="InterPro" id="IPR003968">
    <property type="entry name" value="K_chnl_volt-dep_Kv"/>
</dbReference>
<dbReference type="InterPro" id="IPR011333">
    <property type="entry name" value="SKP1/BTB/POZ_sf"/>
</dbReference>
<dbReference type="InterPro" id="IPR003131">
    <property type="entry name" value="T1-type_BTB"/>
</dbReference>
<dbReference type="InterPro" id="IPR028325">
    <property type="entry name" value="VG_K_chnl"/>
</dbReference>
<dbReference type="InterPro" id="IPR027359">
    <property type="entry name" value="Volt_channel_dom_sf"/>
</dbReference>
<dbReference type="PANTHER" id="PTHR11537:SF113">
    <property type="entry name" value="POTASSIUM VOLTAGE-GATED CHANNEL PROTEIN SHAKER"/>
    <property type="match status" value="1"/>
</dbReference>
<dbReference type="PANTHER" id="PTHR11537">
    <property type="entry name" value="VOLTAGE-GATED POTASSIUM CHANNEL"/>
    <property type="match status" value="1"/>
</dbReference>
<dbReference type="Pfam" id="PF02214">
    <property type="entry name" value="BTB_2"/>
    <property type="match status" value="1"/>
</dbReference>
<dbReference type="Pfam" id="PF00520">
    <property type="entry name" value="Ion_trans"/>
    <property type="match status" value="1"/>
</dbReference>
<dbReference type="PRINTS" id="PR00169">
    <property type="entry name" value="KCHANNEL"/>
</dbReference>
<dbReference type="PRINTS" id="PR01491">
    <property type="entry name" value="KVCHANNEL"/>
</dbReference>
<dbReference type="SUPFAM" id="SSF54695">
    <property type="entry name" value="POZ domain"/>
    <property type="match status" value="1"/>
</dbReference>
<dbReference type="SUPFAM" id="SSF81324">
    <property type="entry name" value="Voltage-gated potassium channels"/>
    <property type="match status" value="1"/>
</dbReference>
<sequence length="536" mass="61234">MRFGGQRRCIESSDDNDSIDSMSIQQKNKEKEEWKWAQSLARRLEQVLNVHPEKYQNGCSSQRPSRQPSPVEQLAPIRSHSADFGRAAEMASGNSEEGKGMLLRNGDDRIRLPSPQRGTPDTSSTQGHPYTDQIVTINVSGMRFQTFESTLSRYPNSLLGDRNKRQHFFVSDTNEFFFDRHRTTSSSFTFEIRNYLFESILYIYQSGGRVKRPEIVPIDIFLKEMRFFQMGDDLLEEFWIAEGYEKPKEVMMPNNKTQRKIWELMEYPDSSLSARIIAFISIAVIALSIISFCWETVPSDIEEKPINNSATAELLDEMDEKHYSPFFWIELMCILWFTIELILRFISCPCKVTFATSVLNIIDFVAIAPFFVNFFFADTSKSNSSMSFAVLRVLRLVRVFRVFKLSRHSVGLQILGKTFRSSVQEFCLLIFFMAIALVLFASGMYFAEQGEPNSKFTSIPASFWFVLVTMTTVGYGDLVPLSPFGKVVGGMCAMIGVLTLALPVPIIVANFKHFYRQENRLASMKSKGDDADDDIA</sequence>
<proteinExistence type="evidence at transcript level"/>
<reference evidence="8 9" key="1">
    <citation type="journal article" date="1998" name="Science">
        <title>Genome sequence of the nematode C. elegans: a platform for investigating biology.</title>
        <authorList>
            <consortium name="The C. elegans sequencing consortium"/>
        </authorList>
    </citation>
    <scope>NUCLEOTIDE SEQUENCE [LARGE SCALE GENOMIC DNA]</scope>
    <scope>ALTERNATIVE SPLICING</scope>
    <source>
        <strain evidence="9">Bristol N2</strain>
    </source>
</reference>
<reference evidence="8" key="2">
    <citation type="journal article" date="2006" name="J. Biol. Chem.">
        <title>Mutant analysis of the Shal (Kv4) voltage-gated fast transient K+ channel in Caenorhabditis elegans.</title>
        <authorList>
            <person name="Fawcett G.L."/>
            <person name="Santi C.M."/>
            <person name="Butler A."/>
            <person name="Harris T."/>
            <person name="Covarrubias M."/>
            <person name="Salkoff L."/>
        </authorList>
    </citation>
    <scope>ALTERNATIVE SPLICING</scope>
    <scope>FUNCTION</scope>
    <scope>TISSUE SPECIFICITY (ISOFORMS A; C AND D)</scope>
</reference>
<reference evidence="8" key="3">
    <citation type="journal article" date="2011" name="J. Physiol. (Lond.)">
        <title>Genetic dissection of ion currents underlying all-or-none action potentials in C. elegans body-wall muscle cells.</title>
        <authorList>
            <person name="Liu P."/>
            <person name="Ge Q."/>
            <person name="Chen B."/>
            <person name="Salkoff L."/>
            <person name="Kotlikoff M.I."/>
            <person name="Wang Z.W."/>
        </authorList>
    </citation>
    <scope>FUNCTION</scope>
    <scope>TISSUE SPECIFICITY</scope>
    <scope>DISRUPTION PHENOTYPE</scope>
</reference>
<accession>Q8I4B0</accession>
<accession>E3W725</accession>
<accession>Q09658</accession>
<accession>Q14V33</accession>
<accession>Q6BEV2</accession>
<accession>Q8I4A9</accession>
<accession>Q8I4B1</accession>
<evidence type="ECO:0000250" key="1">
    <source>
        <dbReference type="UniProtKB" id="P08510"/>
    </source>
</evidence>
<evidence type="ECO:0000255" key="2"/>
<evidence type="ECO:0000256" key="3">
    <source>
        <dbReference type="SAM" id="MobiDB-lite"/>
    </source>
</evidence>
<evidence type="ECO:0000269" key="4">
    <source>
    </source>
</evidence>
<evidence type="ECO:0000269" key="5">
    <source>
    </source>
</evidence>
<evidence type="ECO:0000269" key="6">
    <source>
    </source>
</evidence>
<evidence type="ECO:0000303" key="7">
    <source>
    </source>
</evidence>
<evidence type="ECO:0000305" key="8"/>
<evidence type="ECO:0000312" key="9">
    <source>
        <dbReference type="EMBL" id="CAA88477.2"/>
    </source>
</evidence>
<keyword id="KW-0025">Alternative splicing</keyword>
<keyword id="KW-0407">Ion channel</keyword>
<keyword id="KW-0406">Ion transport</keyword>
<keyword id="KW-0472">Membrane</keyword>
<keyword id="KW-0630">Potassium</keyword>
<keyword id="KW-0631">Potassium channel</keyword>
<keyword id="KW-0633">Potassium transport</keyword>
<keyword id="KW-1185">Reference proteome</keyword>
<keyword id="KW-0812">Transmembrane</keyword>
<keyword id="KW-1133">Transmembrane helix</keyword>
<keyword id="KW-0813">Transport</keyword>
<keyword id="KW-0851">Voltage-gated channel</keyword>
<gene>
    <name evidence="9" type="primary">shk-1</name>
    <name type="ORF">ZK1321.2</name>
</gene>
<protein>
    <recommendedName>
        <fullName>Potassium voltage-gated channel protein shk-1</fullName>
    </recommendedName>
</protein>
<comment type="function">
    <text evidence="4 5">Mediates the voltage-dependent potassium ion permeability of excitable membranes. Has an important role in repolarization and in regulating the pattern of action potential firing. Isoform a expresses currents in a more depolarized voltage range than isoform d.</text>
</comment>
<comment type="subcellular location">
    <subcellularLocation>
        <location evidence="1">Membrane</location>
        <topology evidence="1">Multi-pass membrane protein</topology>
    </subcellularLocation>
</comment>
<comment type="alternative products">
    <event type="alternative splicing"/>
    <isoform>
        <id>Q8I4B0-1</id>
        <name evidence="6">c</name>
        <sequence type="displayed"/>
    </isoform>
    <isoform>
        <id>Q8I4B0-2</id>
        <name evidence="6">b</name>
        <sequence type="described" ref="VSP_044575"/>
    </isoform>
    <isoform>
        <id>Q8I4B0-3</id>
        <name evidence="6">d</name>
        <sequence type="described" ref="VSP_044572"/>
    </isoform>
    <isoform>
        <id>Q8I4B0-4</id>
        <name evidence="6">a</name>
        <sequence type="described" ref="VSP_044573 VSP_044575"/>
    </isoform>
    <isoform>
        <id>Q8I4B0-5</id>
        <name evidence="6">e</name>
        <sequence type="described" ref="VSP_044571 VSP_044575"/>
    </isoform>
    <isoform>
        <id>Q8I4B0-6</id>
        <name evidence="6">f</name>
        <sequence type="described" ref="VSP_044570 VSP_044575"/>
    </isoform>
    <isoform>
        <id>Q8I4B0-7</id>
        <name evidence="6">g</name>
        <sequence type="described" ref="VSP_044574"/>
    </isoform>
</comment>
<comment type="tissue specificity">
    <text evidence="4 5">Expressed in a variety of interneurons and sensory neurons, as well as body wall muscle.</text>
</comment>
<comment type="disruption phenotype">
    <text evidence="5">Delayed spike repolarization.</text>
</comment>
<comment type="similarity">
    <text evidence="2">Belongs to the potassium channel family. A (Shaker) (TC 1.A.1.2) subfamily. Shaker sub-subfamily.</text>
</comment>
<name>KCNSK_CAEEL</name>